<protein>
    <recommendedName>
        <fullName evidence="1">Glucose-1-phosphate adenylyltransferase</fullName>
        <ecNumber evidence="1">2.7.7.27</ecNumber>
    </recommendedName>
    <alternativeName>
        <fullName evidence="1">ADP-glucose pyrophosphorylase</fullName>
        <shortName evidence="1">ADPGlc PPase</shortName>
    </alternativeName>
    <alternativeName>
        <fullName evidence="1">ADP-glucose synthase</fullName>
    </alternativeName>
</protein>
<accession>B2K6F9</accession>
<feature type="chain" id="PRO_1000130513" description="Glucose-1-phosphate adenylyltransferase">
    <location>
        <begin position="1"/>
        <end position="428"/>
    </location>
</feature>
<feature type="binding site" evidence="1">
    <location>
        <position position="114"/>
    </location>
    <ligand>
        <name>alpha-D-glucose 1-phosphate</name>
        <dbReference type="ChEBI" id="CHEBI:58601"/>
    </ligand>
</feature>
<feature type="binding site" evidence="1">
    <location>
        <position position="179"/>
    </location>
    <ligand>
        <name>alpha-D-glucose 1-phosphate</name>
        <dbReference type="ChEBI" id="CHEBI:58601"/>
    </ligand>
</feature>
<feature type="binding site" evidence="1">
    <location>
        <begin position="194"/>
        <end position="195"/>
    </location>
    <ligand>
        <name>alpha-D-glucose 1-phosphate</name>
        <dbReference type="ChEBI" id="CHEBI:58601"/>
    </ligand>
</feature>
<feature type="binding site" evidence="1">
    <location>
        <position position="212"/>
    </location>
    <ligand>
        <name>alpha-D-glucose 1-phosphate</name>
        <dbReference type="ChEBI" id="CHEBI:58601"/>
    </ligand>
</feature>
<dbReference type="EC" id="2.7.7.27" evidence="1"/>
<dbReference type="EMBL" id="CP001048">
    <property type="protein sequence ID" value="ACC90931.1"/>
    <property type="molecule type" value="Genomic_DNA"/>
</dbReference>
<dbReference type="RefSeq" id="WP_011193249.1">
    <property type="nucleotide sequence ID" value="NZ_CP009780.1"/>
</dbReference>
<dbReference type="SMR" id="B2K6F9"/>
<dbReference type="KEGG" id="ypb:YPTS_3982"/>
<dbReference type="PATRIC" id="fig|502801.10.peg.3449"/>
<dbReference type="UniPathway" id="UPA00164"/>
<dbReference type="GO" id="GO:0005524">
    <property type="term" value="F:ATP binding"/>
    <property type="evidence" value="ECO:0007669"/>
    <property type="project" value="UniProtKB-KW"/>
</dbReference>
<dbReference type="GO" id="GO:0008878">
    <property type="term" value="F:glucose-1-phosphate adenylyltransferase activity"/>
    <property type="evidence" value="ECO:0007669"/>
    <property type="project" value="UniProtKB-UniRule"/>
</dbReference>
<dbReference type="GO" id="GO:0005978">
    <property type="term" value="P:glycogen biosynthetic process"/>
    <property type="evidence" value="ECO:0007669"/>
    <property type="project" value="UniProtKB-UniRule"/>
</dbReference>
<dbReference type="CDD" id="cd02508">
    <property type="entry name" value="ADP_Glucose_PP"/>
    <property type="match status" value="1"/>
</dbReference>
<dbReference type="CDD" id="cd04651">
    <property type="entry name" value="LbH_G1P_AT_C"/>
    <property type="match status" value="1"/>
</dbReference>
<dbReference type="FunFam" id="3.90.550.10:FF:000014">
    <property type="entry name" value="Glucose-1-phosphate adenylyltransferase"/>
    <property type="match status" value="1"/>
</dbReference>
<dbReference type="Gene3D" id="2.160.10.10">
    <property type="entry name" value="Hexapeptide repeat proteins"/>
    <property type="match status" value="1"/>
</dbReference>
<dbReference type="Gene3D" id="3.90.550.10">
    <property type="entry name" value="Spore Coat Polysaccharide Biosynthesis Protein SpsA, Chain A"/>
    <property type="match status" value="1"/>
</dbReference>
<dbReference type="HAMAP" id="MF_00624">
    <property type="entry name" value="GlgC"/>
    <property type="match status" value="1"/>
</dbReference>
<dbReference type="InterPro" id="IPR011831">
    <property type="entry name" value="ADP-Glc_PPase"/>
</dbReference>
<dbReference type="InterPro" id="IPR005836">
    <property type="entry name" value="ADP_Glu_pyroP_CS"/>
</dbReference>
<dbReference type="InterPro" id="IPR023049">
    <property type="entry name" value="GlgC_bac"/>
</dbReference>
<dbReference type="InterPro" id="IPR056818">
    <property type="entry name" value="GlmU/GlgC-like_hexapep"/>
</dbReference>
<dbReference type="InterPro" id="IPR005835">
    <property type="entry name" value="NTP_transferase_dom"/>
</dbReference>
<dbReference type="InterPro" id="IPR029044">
    <property type="entry name" value="Nucleotide-diphossugar_trans"/>
</dbReference>
<dbReference type="InterPro" id="IPR011004">
    <property type="entry name" value="Trimer_LpxA-like_sf"/>
</dbReference>
<dbReference type="NCBIfam" id="TIGR02091">
    <property type="entry name" value="glgC"/>
    <property type="match status" value="1"/>
</dbReference>
<dbReference type="NCBIfam" id="NF001947">
    <property type="entry name" value="PRK00725.1"/>
    <property type="match status" value="1"/>
</dbReference>
<dbReference type="NCBIfam" id="NF002023">
    <property type="entry name" value="PRK00844.1"/>
    <property type="match status" value="1"/>
</dbReference>
<dbReference type="PANTHER" id="PTHR43523:SF2">
    <property type="entry name" value="GLUCOSE-1-PHOSPHATE ADENYLYLTRANSFERASE"/>
    <property type="match status" value="1"/>
</dbReference>
<dbReference type="PANTHER" id="PTHR43523">
    <property type="entry name" value="GLUCOSE-1-PHOSPHATE ADENYLYLTRANSFERASE-RELATED"/>
    <property type="match status" value="1"/>
</dbReference>
<dbReference type="Pfam" id="PF24894">
    <property type="entry name" value="Hexapep_GlmU"/>
    <property type="match status" value="1"/>
</dbReference>
<dbReference type="Pfam" id="PF00483">
    <property type="entry name" value="NTP_transferase"/>
    <property type="match status" value="1"/>
</dbReference>
<dbReference type="SUPFAM" id="SSF53448">
    <property type="entry name" value="Nucleotide-diphospho-sugar transferases"/>
    <property type="match status" value="1"/>
</dbReference>
<dbReference type="SUPFAM" id="SSF51161">
    <property type="entry name" value="Trimeric LpxA-like enzymes"/>
    <property type="match status" value="1"/>
</dbReference>
<dbReference type="PROSITE" id="PS00808">
    <property type="entry name" value="ADP_GLC_PYROPHOSPH_1"/>
    <property type="match status" value="1"/>
</dbReference>
<dbReference type="PROSITE" id="PS00809">
    <property type="entry name" value="ADP_GLC_PYROPHOSPH_2"/>
    <property type="match status" value="1"/>
</dbReference>
<dbReference type="PROSITE" id="PS00810">
    <property type="entry name" value="ADP_GLC_PYROPHOSPH_3"/>
    <property type="match status" value="1"/>
</dbReference>
<gene>
    <name evidence="1" type="primary">glgC</name>
    <name type="ordered locus">YPTS_3982</name>
</gene>
<comment type="function">
    <text evidence="1">Involved in the biosynthesis of ADP-glucose, a building block required for the elongation reactions to produce glycogen. Catalyzes the reaction between ATP and alpha-D-glucose 1-phosphate (G1P) to produce pyrophosphate and ADP-Glc.</text>
</comment>
<comment type="catalytic activity">
    <reaction evidence="1">
        <text>alpha-D-glucose 1-phosphate + ATP + H(+) = ADP-alpha-D-glucose + diphosphate</text>
        <dbReference type="Rhea" id="RHEA:12120"/>
        <dbReference type="ChEBI" id="CHEBI:15378"/>
        <dbReference type="ChEBI" id="CHEBI:30616"/>
        <dbReference type="ChEBI" id="CHEBI:33019"/>
        <dbReference type="ChEBI" id="CHEBI:57498"/>
        <dbReference type="ChEBI" id="CHEBI:58601"/>
        <dbReference type="EC" id="2.7.7.27"/>
    </reaction>
</comment>
<comment type="pathway">
    <text evidence="1">Glycan biosynthesis; glycogen biosynthesis.</text>
</comment>
<comment type="subunit">
    <text evidence="1">Homotetramer.</text>
</comment>
<comment type="similarity">
    <text evidence="1">Belongs to the bacterial/plant glucose-1-phosphate adenylyltransferase family.</text>
</comment>
<evidence type="ECO:0000255" key="1">
    <source>
        <dbReference type="HAMAP-Rule" id="MF_00624"/>
    </source>
</evidence>
<organism>
    <name type="scientific">Yersinia pseudotuberculosis serotype IB (strain PB1/+)</name>
    <dbReference type="NCBI Taxonomy" id="502801"/>
    <lineage>
        <taxon>Bacteria</taxon>
        <taxon>Pseudomonadati</taxon>
        <taxon>Pseudomonadota</taxon>
        <taxon>Gammaproteobacteria</taxon>
        <taxon>Enterobacterales</taxon>
        <taxon>Yersiniaceae</taxon>
        <taxon>Yersinia</taxon>
    </lineage>
</organism>
<keyword id="KW-0067">ATP-binding</keyword>
<keyword id="KW-0119">Carbohydrate metabolism</keyword>
<keyword id="KW-0320">Glycogen biosynthesis</keyword>
<keyword id="KW-0321">Glycogen metabolism</keyword>
<keyword id="KW-0547">Nucleotide-binding</keyword>
<keyword id="KW-0548">Nucleotidyltransferase</keyword>
<keyword id="KW-0808">Transferase</keyword>
<sequence>MVRFESTDSLMLARQLPNKTVALILAGGRGSRLKDLTATRAKPAVHFGGKFRIIDFALSNCLNSGVRRIGVITQYQSHTLVQHIQRGWSFLNEEMNEFVDLLPAQQRLSTEQWYKGTADAVCQNLDIIRRYDAEYIVILAGDHIYKMDYSRMLLDHVEKGAECTVACIPVPISEGSEFGIMEVTADYQITAFYEKPANPPPIPGDPSNALASMGIYIFNADYLFKLLEEDNNTPGSSHDFGKDIIPQLTARKVVWAHPFDLSCVTSNAELPPYWRDVGTLDAYWRANLDLASVTPELDMYDRAWPIRTHMEPLPPAKFVQDRSGSHGMTMNSLVSGGCIVSGSVVVHSVLFPRVRVNSFCTIDSSLLLPDVHVGRSCRLRRCIIDRACHIPEGMVIGENANEDSARFYRSEGGVVLVTRDMLAKLEAK</sequence>
<reference key="1">
    <citation type="submission" date="2008-04" db="EMBL/GenBank/DDBJ databases">
        <title>Complete sequence of Yersinia pseudotuberculosis PB1/+.</title>
        <authorList>
            <person name="Copeland A."/>
            <person name="Lucas S."/>
            <person name="Lapidus A."/>
            <person name="Glavina del Rio T."/>
            <person name="Dalin E."/>
            <person name="Tice H."/>
            <person name="Bruce D."/>
            <person name="Goodwin L."/>
            <person name="Pitluck S."/>
            <person name="Munk A.C."/>
            <person name="Brettin T."/>
            <person name="Detter J.C."/>
            <person name="Han C."/>
            <person name="Tapia R."/>
            <person name="Schmutz J."/>
            <person name="Larimer F."/>
            <person name="Land M."/>
            <person name="Hauser L."/>
            <person name="Challacombe J.F."/>
            <person name="Green L."/>
            <person name="Lindler L.E."/>
            <person name="Nikolich M.P."/>
            <person name="Richardson P."/>
        </authorList>
    </citation>
    <scope>NUCLEOTIDE SEQUENCE [LARGE SCALE GENOMIC DNA]</scope>
    <source>
        <strain>PB1/+</strain>
    </source>
</reference>
<proteinExistence type="inferred from homology"/>
<name>GLGC_YERPB</name>